<proteinExistence type="evidence at transcript level"/>
<keyword id="KW-0255">Endonuclease</keyword>
<keyword id="KW-0378">Hydrolase</keyword>
<keyword id="KW-0479">Metal-binding</keyword>
<keyword id="KW-0540">Nuclease</keyword>
<keyword id="KW-0539">Nucleus</keyword>
<keyword id="KW-0597">Phosphoprotein</keyword>
<keyword id="KW-1185">Reference proteome</keyword>
<keyword id="KW-0862">Zinc</keyword>
<keyword id="KW-0863">Zinc-finger</keyword>
<reference key="1">
    <citation type="submission" date="2004-11" db="EMBL/GenBank/DDBJ databases">
        <authorList>
            <consortium name="The German cDNA consortium"/>
        </authorList>
    </citation>
    <scope>NUCLEOTIDE SEQUENCE [LARGE SCALE MRNA]</scope>
    <source>
        <tissue>Brain cortex</tissue>
        <tissue>Kidney</tissue>
    </source>
</reference>
<feature type="chain" id="PRO_0000233268" description="RNA-binding protein NOB1">
    <location>
        <begin position="1"/>
        <end position="411"/>
    </location>
</feature>
<feature type="domain" description="PINc" evidence="4">
    <location>
        <begin position="5"/>
        <end position="108"/>
    </location>
</feature>
<feature type="zinc finger region" description="NOB1" evidence="4">
    <location>
        <begin position="259"/>
        <end position="331"/>
    </location>
</feature>
<feature type="region of interest" description="Disordered" evidence="5">
    <location>
        <begin position="120"/>
        <end position="148"/>
    </location>
</feature>
<feature type="region of interest" description="Disordered" evidence="5">
    <location>
        <begin position="181"/>
        <end position="208"/>
    </location>
</feature>
<feature type="compositionally biased region" description="Basic and acidic residues" evidence="5">
    <location>
        <begin position="136"/>
        <end position="147"/>
    </location>
</feature>
<feature type="compositionally biased region" description="Acidic residues" evidence="5">
    <location>
        <begin position="182"/>
        <end position="192"/>
    </location>
</feature>
<feature type="binding site" evidence="1">
    <location>
        <position position="269"/>
    </location>
    <ligand>
        <name>Zn(2+)</name>
        <dbReference type="ChEBI" id="CHEBI:29105"/>
    </ligand>
</feature>
<feature type="binding site" evidence="1">
    <location>
        <position position="272"/>
    </location>
    <ligand>
        <name>Zn(2+)</name>
        <dbReference type="ChEBI" id="CHEBI:29105"/>
    </ligand>
</feature>
<feature type="binding site" evidence="1">
    <location>
        <position position="284"/>
    </location>
    <ligand>
        <name>Zn(2+)</name>
        <dbReference type="ChEBI" id="CHEBI:29105"/>
    </ligand>
</feature>
<feature type="binding site" evidence="1">
    <location>
        <position position="287"/>
    </location>
    <ligand>
        <name>Zn(2+)</name>
        <dbReference type="ChEBI" id="CHEBI:29105"/>
    </ligand>
</feature>
<feature type="modified residue" description="Phosphoserine" evidence="3">
    <location>
        <position position="184"/>
    </location>
</feature>
<feature type="modified residue" description="Phosphoserine" evidence="3">
    <location>
        <position position="200"/>
    </location>
</feature>
<feature type="modified residue" description="Phosphoserine" evidence="3">
    <location>
        <position position="324"/>
    </location>
</feature>
<feature type="modified residue" description="Phosphoserine" evidence="3">
    <location>
        <position position="351"/>
    </location>
</feature>
<feature type="sequence conflict" description="In Ref. 1; CAH89873." evidence="6" ref="1">
    <original>L</original>
    <variation>LQ</variation>
    <location>
        <position position="20"/>
    </location>
</feature>
<comment type="function">
    <text evidence="2 3">May play a role in mRNA degradation (By similarity). Endonuclease required for processing of 20S pre-rRNA precursor and biogenesis of 40S ribosomal subunits (By similarity).</text>
</comment>
<comment type="subunit">
    <text evidence="2 3">May interact with UPF2 (By similarity). Component of the small ribosomal subunit, ribosomal RNA processing complex (SSU RRP complex) (By similarity).</text>
</comment>
<comment type="subcellular location">
    <subcellularLocation>
        <location evidence="3">Nucleus</location>
    </subcellularLocation>
</comment>
<comment type="similarity">
    <text evidence="6">Belongs to the NOB1 family.</text>
</comment>
<gene>
    <name type="primary">NOB1</name>
</gene>
<accession>Q5RBB3</accession>
<accession>Q5RED4</accession>
<organism>
    <name type="scientific">Pongo abelii</name>
    <name type="common">Sumatran orangutan</name>
    <name type="synonym">Pongo pygmaeus abelii</name>
    <dbReference type="NCBI Taxonomy" id="9601"/>
    <lineage>
        <taxon>Eukaryota</taxon>
        <taxon>Metazoa</taxon>
        <taxon>Chordata</taxon>
        <taxon>Craniata</taxon>
        <taxon>Vertebrata</taxon>
        <taxon>Euteleostomi</taxon>
        <taxon>Mammalia</taxon>
        <taxon>Eutheria</taxon>
        <taxon>Euarchontoglires</taxon>
        <taxon>Primates</taxon>
        <taxon>Haplorrhini</taxon>
        <taxon>Catarrhini</taxon>
        <taxon>Hominidae</taxon>
        <taxon>Pongo</taxon>
    </lineage>
</organism>
<dbReference type="EC" id="3.1.-.-" evidence="2"/>
<dbReference type="EMBL" id="CR857596">
    <property type="protein sequence ID" value="CAH89873.1"/>
    <property type="molecule type" value="Transcribed_RNA"/>
</dbReference>
<dbReference type="EMBL" id="CR858738">
    <property type="protein sequence ID" value="CAH90947.1"/>
    <property type="molecule type" value="mRNA"/>
</dbReference>
<dbReference type="RefSeq" id="NP_001127354.1">
    <property type="nucleotide sequence ID" value="NM_001133882.1"/>
</dbReference>
<dbReference type="SMR" id="Q5RBB3"/>
<dbReference type="FunCoup" id="Q5RBB3">
    <property type="interactions" value="2774"/>
</dbReference>
<dbReference type="STRING" id="9601.ENSPPYP00000008479"/>
<dbReference type="Ensembl" id="ENSPPYT00000008825.3">
    <property type="protein sequence ID" value="ENSPPYP00000008479.2"/>
    <property type="gene ID" value="ENSPPYG00000007509.3"/>
</dbReference>
<dbReference type="GeneID" id="100174418"/>
<dbReference type="KEGG" id="pon:100174418"/>
<dbReference type="CTD" id="28987"/>
<dbReference type="eggNOG" id="KOG2463">
    <property type="taxonomic scope" value="Eukaryota"/>
</dbReference>
<dbReference type="GeneTree" id="ENSGT00390000015857"/>
<dbReference type="HOGENOM" id="CLU_024666_0_0_1"/>
<dbReference type="InParanoid" id="Q5RBB3"/>
<dbReference type="OMA" id="GYELECE"/>
<dbReference type="OrthoDB" id="446759at2759"/>
<dbReference type="TreeFam" id="TF105838"/>
<dbReference type="Proteomes" id="UP000001595">
    <property type="component" value="Chromosome 16"/>
</dbReference>
<dbReference type="GO" id="GO:0005634">
    <property type="term" value="C:nucleus"/>
    <property type="evidence" value="ECO:0007669"/>
    <property type="project" value="UniProtKB-SubCell"/>
</dbReference>
<dbReference type="GO" id="GO:0030688">
    <property type="term" value="C:preribosome, small subunit precursor"/>
    <property type="evidence" value="ECO:0007669"/>
    <property type="project" value="TreeGrafter"/>
</dbReference>
<dbReference type="GO" id="GO:0004521">
    <property type="term" value="F:RNA endonuclease activity"/>
    <property type="evidence" value="ECO:0007669"/>
    <property type="project" value="InterPro"/>
</dbReference>
<dbReference type="GO" id="GO:0008270">
    <property type="term" value="F:zinc ion binding"/>
    <property type="evidence" value="ECO:0007669"/>
    <property type="project" value="UniProtKB-KW"/>
</dbReference>
<dbReference type="GO" id="GO:0030490">
    <property type="term" value="P:maturation of SSU-rRNA"/>
    <property type="evidence" value="ECO:0007669"/>
    <property type="project" value="TreeGrafter"/>
</dbReference>
<dbReference type="GO" id="GO:0007601">
    <property type="term" value="P:visual perception"/>
    <property type="evidence" value="ECO:0007669"/>
    <property type="project" value="Ensembl"/>
</dbReference>
<dbReference type="CDD" id="cd09876">
    <property type="entry name" value="PIN_Nob1-like"/>
    <property type="match status" value="1"/>
</dbReference>
<dbReference type="FunFam" id="3.40.50.1010:FF:000018">
    <property type="entry name" value="RNA-binding protein NOB1"/>
    <property type="match status" value="1"/>
</dbReference>
<dbReference type="Gene3D" id="3.40.50.1010">
    <property type="entry name" value="5'-nuclease"/>
    <property type="match status" value="1"/>
</dbReference>
<dbReference type="Gene3D" id="6.20.210.10">
    <property type="entry name" value="Nin one binding (NOB1), Zn-ribbon-like"/>
    <property type="match status" value="1"/>
</dbReference>
<dbReference type="InterPro" id="IPR039907">
    <property type="entry name" value="NOB1"/>
</dbReference>
<dbReference type="InterPro" id="IPR017117">
    <property type="entry name" value="Nob1_euk"/>
</dbReference>
<dbReference type="InterPro" id="IPR036283">
    <property type="entry name" value="NOB1_Zf-like_sf"/>
</dbReference>
<dbReference type="InterPro" id="IPR014881">
    <property type="entry name" value="NOB1_Zn-bd"/>
</dbReference>
<dbReference type="InterPro" id="IPR002716">
    <property type="entry name" value="PIN_dom"/>
</dbReference>
<dbReference type="InterPro" id="IPR033411">
    <property type="entry name" value="Ribonuclease_PIN"/>
</dbReference>
<dbReference type="InterPro" id="IPR033461">
    <property type="entry name" value="WRNPLPNID"/>
</dbReference>
<dbReference type="PANTHER" id="PTHR12814">
    <property type="entry name" value="RNA-BINDING PROTEIN NOB1"/>
    <property type="match status" value="1"/>
</dbReference>
<dbReference type="PANTHER" id="PTHR12814:SF2">
    <property type="entry name" value="RNA-BINDING PROTEIN NOB1"/>
    <property type="match status" value="1"/>
</dbReference>
<dbReference type="Pfam" id="PF17146">
    <property type="entry name" value="PIN_6"/>
    <property type="match status" value="1"/>
</dbReference>
<dbReference type="Pfam" id="PF15017">
    <property type="entry name" value="WRNPLPNID"/>
    <property type="match status" value="1"/>
</dbReference>
<dbReference type="Pfam" id="PF08772">
    <property type="entry name" value="Zn_ribbon_NOB1"/>
    <property type="match status" value="1"/>
</dbReference>
<dbReference type="PIRSF" id="PIRSF037125">
    <property type="entry name" value="D-site_20S_pre-rRNA_nuclease"/>
    <property type="match status" value="1"/>
</dbReference>
<dbReference type="SMART" id="SM00670">
    <property type="entry name" value="PINc"/>
    <property type="match status" value="1"/>
</dbReference>
<dbReference type="SUPFAM" id="SSF144206">
    <property type="entry name" value="NOB1 zinc finger-like"/>
    <property type="match status" value="1"/>
</dbReference>
<name>NOB1_PONAB</name>
<evidence type="ECO:0000250" key="1">
    <source>
        <dbReference type="UniProtKB" id="Q8BW10"/>
    </source>
</evidence>
<evidence type="ECO:0000250" key="2">
    <source>
        <dbReference type="UniProtKB" id="Q9FLL1"/>
    </source>
</evidence>
<evidence type="ECO:0000250" key="3">
    <source>
        <dbReference type="UniProtKB" id="Q9ULX3"/>
    </source>
</evidence>
<evidence type="ECO:0000255" key="4"/>
<evidence type="ECO:0000256" key="5">
    <source>
        <dbReference type="SAM" id="MobiDB-lite"/>
    </source>
</evidence>
<evidence type="ECO:0000305" key="6"/>
<sequence>MAPVEHVVADAGAFLRDAALQDIGKNIYTIREVVTEIRDKATRRRLAVLPYELRFKEPLPEYVRLVTEFSKKTGDYPSLSATDIQVLALTYQLEAEFVGVSHLKQEPQKVKVSSSIQHPETPLHISGFHLPSKPKPPQETEKGHPACEPENLEFSSFMFWRNPLPNIDHELQELLIDRGEDIPSDEEEEENGFEDRRDDSDDDGGGWITPSNIKQIQQELEQCDVPEDVRVGCVTTDFAMQNVLLQMGLHVLAVNGMLIREARSYILRCHGCFKTTSDMSRVFCSHCGNKTLKKVSVTVSDDGTLHMHFSRNPKVLNPRGLRYSLPTPKGGKYAINPHLTEDQRFPQLRLSRKARQKTNVFAPDYVAGVSPFVENDISSRSATLQVRDSSLGAGRRRLNPNASRRKFVKKR</sequence>
<protein>
    <recommendedName>
        <fullName>RNA-binding protein NOB1</fullName>
        <ecNumber evidence="2">3.1.-.-</ecNumber>
    </recommendedName>
</protein>